<reference key="1">
    <citation type="journal article" date="2005" name="Genome Res.">
        <title>Living with two extremes: conclusions from the genome sequence of Natronomonas pharaonis.</title>
        <authorList>
            <person name="Falb M."/>
            <person name="Pfeiffer F."/>
            <person name="Palm P."/>
            <person name="Rodewald K."/>
            <person name="Hickmann V."/>
            <person name="Tittor J."/>
            <person name="Oesterhelt D."/>
        </authorList>
    </citation>
    <scope>NUCLEOTIDE SEQUENCE [LARGE SCALE GENOMIC DNA]</scope>
    <source>
        <strain>ATCC 35678 / DSM 2160 / CIP 103997 / JCM 8858 / NBRC 14720 / NCIMB 2260 / Gabara</strain>
    </source>
</reference>
<keyword id="KW-1185">Reference proteome</keyword>
<keyword id="KW-0687">Ribonucleoprotein</keyword>
<keyword id="KW-0689">Ribosomal protein</keyword>
<proteinExistence type="inferred from homology"/>
<evidence type="ECO:0000255" key="1">
    <source>
        <dbReference type="HAMAP-Rule" id="MF_01343"/>
    </source>
</evidence>
<evidence type="ECO:0000256" key="2">
    <source>
        <dbReference type="SAM" id="MobiDB-lite"/>
    </source>
</evidence>
<evidence type="ECO:0000305" key="3"/>
<feature type="chain" id="PRO_0000115613" description="Small ribosomal subunit protein uS15">
    <location>
        <begin position="1"/>
        <end position="154"/>
    </location>
</feature>
<feature type="region of interest" description="Disordered" evidence="2">
    <location>
        <begin position="1"/>
        <end position="32"/>
    </location>
</feature>
<feature type="compositionally biased region" description="Basic residues" evidence="2">
    <location>
        <begin position="1"/>
        <end position="10"/>
    </location>
</feature>
<feature type="compositionally biased region" description="Acidic residues" evidence="2">
    <location>
        <begin position="21"/>
        <end position="32"/>
    </location>
</feature>
<gene>
    <name evidence="1" type="primary">rps15</name>
    <name type="ordered locus">NP_3204A</name>
</gene>
<name>RS15_NATPD</name>
<organism>
    <name type="scientific">Natronomonas pharaonis (strain ATCC 35678 / DSM 2160 / CIP 103997 / JCM 8858 / NBRC 14720 / NCIMB 2260 / Gabara)</name>
    <name type="common">Halobacterium pharaonis</name>
    <dbReference type="NCBI Taxonomy" id="348780"/>
    <lineage>
        <taxon>Archaea</taxon>
        <taxon>Methanobacteriati</taxon>
        <taxon>Methanobacteriota</taxon>
        <taxon>Stenosarchaea group</taxon>
        <taxon>Halobacteria</taxon>
        <taxon>Halobacteriales</taxon>
        <taxon>Haloarculaceae</taxon>
        <taxon>Natronomonas</taxon>
    </lineage>
</organism>
<accession>Q3IQA3</accession>
<sequence>MARMHSRRRGSSGSDRPTADEPPEWSEVDEDAIEDRVVELAEEGYDPSQIGLKLRDEGVQGVPVPDVKLATGKKVTEILEENDAENELPEDLRNLMERAIRLREHMDRNPGDAQNKRALQNTESKIRRLVDYYRGDKLDEEFTYSYEDAKDRLE</sequence>
<comment type="subunit">
    <text evidence="1">Part of the 30S ribosomal subunit.</text>
</comment>
<comment type="similarity">
    <text evidence="1">Belongs to the universal ribosomal protein uS15 family.</text>
</comment>
<dbReference type="EMBL" id="CR936257">
    <property type="protein sequence ID" value="CAI49693.1"/>
    <property type="molecule type" value="Genomic_DNA"/>
</dbReference>
<dbReference type="RefSeq" id="WP_011323315.1">
    <property type="nucleotide sequence ID" value="NC_007426.1"/>
</dbReference>
<dbReference type="SMR" id="Q3IQA3"/>
<dbReference type="STRING" id="348780.NP_3204A"/>
<dbReference type="EnsemblBacteria" id="CAI49693">
    <property type="protein sequence ID" value="CAI49693"/>
    <property type="gene ID" value="NP_3204A"/>
</dbReference>
<dbReference type="GeneID" id="3703171"/>
<dbReference type="KEGG" id="nph:NP_3204A"/>
<dbReference type="eggNOG" id="arCOG04185">
    <property type="taxonomic scope" value="Archaea"/>
</dbReference>
<dbReference type="HOGENOM" id="CLU_090139_2_0_2"/>
<dbReference type="OrthoDB" id="6533at2157"/>
<dbReference type="Proteomes" id="UP000002698">
    <property type="component" value="Chromosome"/>
</dbReference>
<dbReference type="GO" id="GO:0022627">
    <property type="term" value="C:cytosolic small ribosomal subunit"/>
    <property type="evidence" value="ECO:0007669"/>
    <property type="project" value="TreeGrafter"/>
</dbReference>
<dbReference type="GO" id="GO:0070181">
    <property type="term" value="F:small ribosomal subunit rRNA binding"/>
    <property type="evidence" value="ECO:0007669"/>
    <property type="project" value="TreeGrafter"/>
</dbReference>
<dbReference type="GO" id="GO:0003735">
    <property type="term" value="F:structural constituent of ribosome"/>
    <property type="evidence" value="ECO:0007669"/>
    <property type="project" value="InterPro"/>
</dbReference>
<dbReference type="GO" id="GO:0006412">
    <property type="term" value="P:translation"/>
    <property type="evidence" value="ECO:0007669"/>
    <property type="project" value="UniProtKB-UniRule"/>
</dbReference>
<dbReference type="CDD" id="cd00353">
    <property type="entry name" value="Ribosomal_S15p_S13e"/>
    <property type="match status" value="1"/>
</dbReference>
<dbReference type="Gene3D" id="4.10.860.130">
    <property type="match status" value="1"/>
</dbReference>
<dbReference type="Gene3D" id="1.10.287.10">
    <property type="entry name" value="S15/NS1, RNA-binding"/>
    <property type="match status" value="1"/>
</dbReference>
<dbReference type="HAMAP" id="MF_01343_A">
    <property type="entry name" value="Ribosomal_uS15_A"/>
    <property type="match status" value="1"/>
</dbReference>
<dbReference type="InterPro" id="IPR000589">
    <property type="entry name" value="Ribosomal_uS15"/>
</dbReference>
<dbReference type="InterPro" id="IPR023029">
    <property type="entry name" value="Ribosomal_uS15_arc_euk"/>
</dbReference>
<dbReference type="InterPro" id="IPR012606">
    <property type="entry name" value="Ribosomal_uS15_N"/>
</dbReference>
<dbReference type="InterPro" id="IPR009068">
    <property type="entry name" value="uS15_NS1_RNA-bd_sf"/>
</dbReference>
<dbReference type="NCBIfam" id="NF006331">
    <property type="entry name" value="PRK08561.1"/>
    <property type="match status" value="1"/>
</dbReference>
<dbReference type="PANTHER" id="PTHR11885">
    <property type="entry name" value="RIBOSOMAL PROTEIN S15P/S13E"/>
    <property type="match status" value="1"/>
</dbReference>
<dbReference type="PANTHER" id="PTHR11885:SF6">
    <property type="entry name" value="SMALL RIBOSOMAL SUBUNIT PROTEIN US15"/>
    <property type="match status" value="1"/>
</dbReference>
<dbReference type="Pfam" id="PF08069">
    <property type="entry name" value="Ribosomal_S13_N"/>
    <property type="match status" value="1"/>
</dbReference>
<dbReference type="Pfam" id="PF00312">
    <property type="entry name" value="Ribosomal_S15"/>
    <property type="match status" value="1"/>
</dbReference>
<dbReference type="SMART" id="SM01386">
    <property type="entry name" value="Ribosomal_S13_N"/>
    <property type="match status" value="1"/>
</dbReference>
<dbReference type="SMART" id="SM01387">
    <property type="entry name" value="Ribosomal_S15"/>
    <property type="match status" value="1"/>
</dbReference>
<dbReference type="SUPFAM" id="SSF47060">
    <property type="entry name" value="S15/NS1 RNA-binding domain"/>
    <property type="match status" value="1"/>
</dbReference>
<dbReference type="PROSITE" id="PS00362">
    <property type="entry name" value="RIBOSOMAL_S15"/>
    <property type="match status" value="1"/>
</dbReference>
<protein>
    <recommendedName>
        <fullName evidence="1">Small ribosomal subunit protein uS15</fullName>
    </recommendedName>
    <alternativeName>
        <fullName evidence="3">30S ribosomal protein S15</fullName>
    </alternativeName>
</protein>